<accession>A7MJ43</accession>
<dbReference type="EMBL" id="CP000783">
    <property type="protein sequence ID" value="ABU75848.1"/>
    <property type="molecule type" value="Genomic_DNA"/>
</dbReference>
<dbReference type="RefSeq" id="WP_012123940.1">
    <property type="nucleotide sequence ID" value="NC_009778.1"/>
</dbReference>
<dbReference type="SMR" id="A7MJ43"/>
<dbReference type="KEGG" id="esa:ESA_00558"/>
<dbReference type="PATRIC" id="fig|290339.8.peg.503"/>
<dbReference type="HOGENOM" id="CLU_002472_4_0_6"/>
<dbReference type="Proteomes" id="UP000000260">
    <property type="component" value="Chromosome"/>
</dbReference>
<dbReference type="GO" id="GO:0005829">
    <property type="term" value="C:cytosol"/>
    <property type="evidence" value="ECO:0007669"/>
    <property type="project" value="TreeGrafter"/>
</dbReference>
<dbReference type="GO" id="GO:0005524">
    <property type="term" value="F:ATP binding"/>
    <property type="evidence" value="ECO:0007669"/>
    <property type="project" value="UniProtKB-UniRule"/>
</dbReference>
<dbReference type="GO" id="GO:0140664">
    <property type="term" value="F:ATP-dependent DNA damage sensor activity"/>
    <property type="evidence" value="ECO:0007669"/>
    <property type="project" value="InterPro"/>
</dbReference>
<dbReference type="GO" id="GO:0003684">
    <property type="term" value="F:damaged DNA binding"/>
    <property type="evidence" value="ECO:0007669"/>
    <property type="project" value="UniProtKB-UniRule"/>
</dbReference>
<dbReference type="GO" id="GO:0030983">
    <property type="term" value="F:mismatched DNA binding"/>
    <property type="evidence" value="ECO:0007669"/>
    <property type="project" value="InterPro"/>
</dbReference>
<dbReference type="GO" id="GO:0006298">
    <property type="term" value="P:mismatch repair"/>
    <property type="evidence" value="ECO:0007669"/>
    <property type="project" value="UniProtKB-UniRule"/>
</dbReference>
<dbReference type="CDD" id="cd03284">
    <property type="entry name" value="ABC_MutS1"/>
    <property type="match status" value="1"/>
</dbReference>
<dbReference type="FunFam" id="1.10.1420.10:FF:000002">
    <property type="entry name" value="DNA mismatch repair protein MutS"/>
    <property type="match status" value="1"/>
</dbReference>
<dbReference type="FunFam" id="3.30.420.110:FF:000001">
    <property type="entry name" value="DNA mismatch repair protein MutS"/>
    <property type="match status" value="1"/>
</dbReference>
<dbReference type="FunFam" id="3.40.1170.10:FF:000001">
    <property type="entry name" value="DNA mismatch repair protein MutS"/>
    <property type="match status" value="1"/>
</dbReference>
<dbReference type="FunFam" id="3.40.50.300:FF:000283">
    <property type="entry name" value="DNA mismatch repair protein MutS"/>
    <property type="match status" value="1"/>
</dbReference>
<dbReference type="Gene3D" id="1.10.1420.10">
    <property type="match status" value="2"/>
</dbReference>
<dbReference type="Gene3D" id="6.10.140.430">
    <property type="match status" value="1"/>
</dbReference>
<dbReference type="Gene3D" id="3.40.1170.10">
    <property type="entry name" value="DNA repair protein MutS, domain I"/>
    <property type="match status" value="1"/>
</dbReference>
<dbReference type="Gene3D" id="3.30.420.110">
    <property type="entry name" value="MutS, connector domain"/>
    <property type="match status" value="1"/>
</dbReference>
<dbReference type="Gene3D" id="3.40.50.300">
    <property type="entry name" value="P-loop containing nucleotide triphosphate hydrolases"/>
    <property type="match status" value="1"/>
</dbReference>
<dbReference type="HAMAP" id="MF_00096">
    <property type="entry name" value="MutS"/>
    <property type="match status" value="1"/>
</dbReference>
<dbReference type="InterPro" id="IPR005748">
    <property type="entry name" value="DNA_mismatch_repair_MutS"/>
</dbReference>
<dbReference type="InterPro" id="IPR007695">
    <property type="entry name" value="DNA_mismatch_repair_MutS-lik_N"/>
</dbReference>
<dbReference type="InterPro" id="IPR017261">
    <property type="entry name" value="DNA_mismatch_repair_MutS/MSH"/>
</dbReference>
<dbReference type="InterPro" id="IPR000432">
    <property type="entry name" value="DNA_mismatch_repair_MutS_C"/>
</dbReference>
<dbReference type="InterPro" id="IPR007861">
    <property type="entry name" value="DNA_mismatch_repair_MutS_clamp"/>
</dbReference>
<dbReference type="InterPro" id="IPR007696">
    <property type="entry name" value="DNA_mismatch_repair_MutS_core"/>
</dbReference>
<dbReference type="InterPro" id="IPR016151">
    <property type="entry name" value="DNA_mismatch_repair_MutS_N"/>
</dbReference>
<dbReference type="InterPro" id="IPR036187">
    <property type="entry name" value="DNA_mismatch_repair_MutS_sf"/>
</dbReference>
<dbReference type="InterPro" id="IPR007860">
    <property type="entry name" value="DNA_mmatch_repair_MutS_con_dom"/>
</dbReference>
<dbReference type="InterPro" id="IPR045076">
    <property type="entry name" value="MutS"/>
</dbReference>
<dbReference type="InterPro" id="IPR036678">
    <property type="entry name" value="MutS_con_dom_sf"/>
</dbReference>
<dbReference type="InterPro" id="IPR027417">
    <property type="entry name" value="P-loop_NTPase"/>
</dbReference>
<dbReference type="NCBIfam" id="TIGR01070">
    <property type="entry name" value="mutS1"/>
    <property type="match status" value="1"/>
</dbReference>
<dbReference type="NCBIfam" id="NF003810">
    <property type="entry name" value="PRK05399.1"/>
    <property type="match status" value="1"/>
</dbReference>
<dbReference type="PANTHER" id="PTHR11361:SF34">
    <property type="entry name" value="DNA MISMATCH REPAIR PROTEIN MSH1, MITOCHONDRIAL"/>
    <property type="match status" value="1"/>
</dbReference>
<dbReference type="PANTHER" id="PTHR11361">
    <property type="entry name" value="DNA MISMATCH REPAIR PROTEIN MUTS FAMILY MEMBER"/>
    <property type="match status" value="1"/>
</dbReference>
<dbReference type="Pfam" id="PF01624">
    <property type="entry name" value="MutS_I"/>
    <property type="match status" value="1"/>
</dbReference>
<dbReference type="Pfam" id="PF05188">
    <property type="entry name" value="MutS_II"/>
    <property type="match status" value="1"/>
</dbReference>
<dbReference type="Pfam" id="PF05192">
    <property type="entry name" value="MutS_III"/>
    <property type="match status" value="1"/>
</dbReference>
<dbReference type="Pfam" id="PF05190">
    <property type="entry name" value="MutS_IV"/>
    <property type="match status" value="1"/>
</dbReference>
<dbReference type="Pfam" id="PF00488">
    <property type="entry name" value="MutS_V"/>
    <property type="match status" value="1"/>
</dbReference>
<dbReference type="PIRSF" id="PIRSF037677">
    <property type="entry name" value="DNA_mis_repair_Msh6"/>
    <property type="match status" value="1"/>
</dbReference>
<dbReference type="SMART" id="SM00534">
    <property type="entry name" value="MUTSac"/>
    <property type="match status" value="1"/>
</dbReference>
<dbReference type="SMART" id="SM00533">
    <property type="entry name" value="MUTSd"/>
    <property type="match status" value="1"/>
</dbReference>
<dbReference type="SUPFAM" id="SSF55271">
    <property type="entry name" value="DNA repair protein MutS, domain I"/>
    <property type="match status" value="1"/>
</dbReference>
<dbReference type="SUPFAM" id="SSF53150">
    <property type="entry name" value="DNA repair protein MutS, domain II"/>
    <property type="match status" value="1"/>
</dbReference>
<dbReference type="SUPFAM" id="SSF48334">
    <property type="entry name" value="DNA repair protein MutS, domain III"/>
    <property type="match status" value="1"/>
</dbReference>
<dbReference type="SUPFAM" id="SSF52540">
    <property type="entry name" value="P-loop containing nucleoside triphosphate hydrolases"/>
    <property type="match status" value="1"/>
</dbReference>
<dbReference type="PROSITE" id="PS00486">
    <property type="entry name" value="DNA_MISMATCH_REPAIR_2"/>
    <property type="match status" value="1"/>
</dbReference>
<proteinExistence type="inferred from homology"/>
<keyword id="KW-0067">ATP-binding</keyword>
<keyword id="KW-0227">DNA damage</keyword>
<keyword id="KW-0234">DNA repair</keyword>
<keyword id="KW-0238">DNA-binding</keyword>
<keyword id="KW-0547">Nucleotide-binding</keyword>
<keyword id="KW-1185">Reference proteome</keyword>
<feature type="chain" id="PRO_1000071276" description="DNA mismatch repair protein MutS">
    <location>
        <begin position="1"/>
        <end position="853"/>
    </location>
</feature>
<feature type="binding site" evidence="1">
    <location>
        <begin position="614"/>
        <end position="621"/>
    </location>
    <ligand>
        <name>ATP</name>
        <dbReference type="ChEBI" id="CHEBI:30616"/>
    </ligand>
</feature>
<evidence type="ECO:0000255" key="1">
    <source>
        <dbReference type="HAMAP-Rule" id="MF_00096"/>
    </source>
</evidence>
<reference key="1">
    <citation type="journal article" date="2010" name="PLoS ONE">
        <title>Genome sequence of Cronobacter sakazakii BAA-894 and comparative genomic hybridization analysis with other Cronobacter species.</title>
        <authorList>
            <person name="Kucerova E."/>
            <person name="Clifton S.W."/>
            <person name="Xia X.Q."/>
            <person name="Long F."/>
            <person name="Porwollik S."/>
            <person name="Fulton L."/>
            <person name="Fronick C."/>
            <person name="Minx P."/>
            <person name="Kyung K."/>
            <person name="Warren W."/>
            <person name="Fulton R."/>
            <person name="Feng D."/>
            <person name="Wollam A."/>
            <person name="Shah N."/>
            <person name="Bhonagiri V."/>
            <person name="Nash W.E."/>
            <person name="Hallsworth-Pepin K."/>
            <person name="Wilson R.K."/>
            <person name="McClelland M."/>
            <person name="Forsythe S.J."/>
        </authorList>
    </citation>
    <scope>NUCLEOTIDE SEQUENCE [LARGE SCALE GENOMIC DNA]</scope>
    <source>
        <strain>ATCC BAA-894</strain>
    </source>
</reference>
<gene>
    <name evidence="1" type="primary">mutS</name>
    <name type="ordered locus">ESA_00558</name>
</gene>
<sequence>MSTSETFDAHTPMMQQYLKLKAQHPDILLFYRMGDFYELFYDDAKRASQLLDISLTKRGASAGEPIPMAGVPHHAVENYLAKLVNLGESVAICEQIGDPATSKGPVERKVVRIVTPGTISDEALLQERQDNLLAAIWQDSKGFGYATLDISSGRFRVSEPQDRETMAAELQRTNPAELLYAEDFAEMSLIEGRRGLRRRPLWEFELDTARQQLNLQFGTRDLVGFGVENAPRGLCAAGCLLQYVKDTQRTSLPHIRSITMERQQDGIIMDAATRRNLEITQNLAGGVENTLASVLDCTVTPMGSRMLKRWLHMPVRDTSVLRHRQQAIAALMEYSTEIQPVLRQVGDLERILARLALRTARPRDLARMRHAFQQLPTLNTLLADIEAEYVQTLREQMGDFAELRDLLERAIIEAPPVLVRDGGVIAPGYHEELDEWRALADGATDYLDRLEIREREKLGIDTLKVGFNAVHGYFIQVSRGQSHMVPIHYVRRQTLKNAERYIIPELKEYEDKVLTSKGKALALEKQLYDELFDLLLPHLAELQKSAAALAELDVLTNLAERADTLNYHCPTLTDKPGIRLVEGRHPVVERVLNEPFIANPLSLSPQRRMLIITGPNMGGKSTYMRQTALIVLMAYIGSFVPAEQAEIGPIDRIFTRVGAADDLASGRSTFMVEMTETANILHNATEHSLVLMDEIGRGTSTYDGLSLAWACAESLANRIKALTLFATHYFELTQLPEKMEGVANVHLDAIEHGDTIAFMHSVQDGAASKSYGLAVAALAGVPKEVIKRARQKLRELESLSGNAAATQVDGTQMSLLAAAEETSPAVEALENLDPDSLSPRQALEWIYRLKSLV</sequence>
<protein>
    <recommendedName>
        <fullName evidence="1">DNA mismatch repair protein MutS</fullName>
    </recommendedName>
</protein>
<organism>
    <name type="scientific">Cronobacter sakazakii (strain ATCC BAA-894)</name>
    <name type="common">Enterobacter sakazakii</name>
    <dbReference type="NCBI Taxonomy" id="290339"/>
    <lineage>
        <taxon>Bacteria</taxon>
        <taxon>Pseudomonadati</taxon>
        <taxon>Pseudomonadota</taxon>
        <taxon>Gammaproteobacteria</taxon>
        <taxon>Enterobacterales</taxon>
        <taxon>Enterobacteriaceae</taxon>
        <taxon>Cronobacter</taxon>
    </lineage>
</organism>
<name>MUTS_CROS8</name>
<comment type="function">
    <text evidence="1">This protein is involved in the repair of mismatches in DNA. It is possible that it carries out the mismatch recognition step. This protein has a weak ATPase activity.</text>
</comment>
<comment type="similarity">
    <text evidence="1">Belongs to the DNA mismatch repair MutS family.</text>
</comment>